<organism>
    <name type="scientific">Bluetongue virus 11 (isolate USA)</name>
    <name type="common">BTV 11</name>
    <dbReference type="NCBI Taxonomy" id="33716"/>
    <lineage>
        <taxon>Viruses</taxon>
        <taxon>Riboviria</taxon>
        <taxon>Orthornavirae</taxon>
        <taxon>Duplornaviricota</taxon>
        <taxon>Resentoviricetes</taxon>
        <taxon>Reovirales</taxon>
        <taxon>Sedoreoviridae</taxon>
        <taxon>Orbivirus</taxon>
        <taxon>Bluetongue virus</taxon>
    </lineage>
</organism>
<reference key="1">
    <citation type="journal article" date="1993" name="Virology">
        <title>Conservation of the segment 4 gene sequence and of a leucine zipper motif in VP4 among five US bluetongue viruses.</title>
        <authorList>
            <person name="Huang I.J."/>
            <person name="Hayama E."/>
            <person name="Jeong Y.J."/>
            <person name="Li J.K.-K."/>
        </authorList>
    </citation>
    <scope>NUCLEOTIDE SEQUENCE [MRNA]</scope>
</reference>
<feature type="chain" id="PRO_0000222706" description="Core protein VP4">
    <location>
        <begin position="1"/>
        <end position="644"/>
    </location>
</feature>
<gene>
    <name type="primary">Segment-4</name>
</gene>
<sequence length="644" mass="75444">MPEPHAVLYVTNELSHIVKNGFLPIWKLTGDESLNDLWLENGKYATDVYAYGDVSKWTIRQLRGHGFIFISTHKNVQLADIIKTVDVRIPREVARSHDMKAFENEIGRRRIRMRKGFGDALRNYAFKMAIEFHGSEAETLNDANPRLHKIYGMPEMPPLYMEYAEIGTRFDDEPTDEKLVSMLDYIVYSAEEVHYVGCGDLRTLMQFKKRSPGRFRRVLWHVYDPIAPECSDPNVIVHNIMVDSKKNILKHMNFLKRVERLFIWDVSSDRSQMNDHEWETTRFAEDRLGEEIAYEMGGAFSSALIKHRIPNSKDEYHCISTYLFPQPGADADMYELRNFMRLRGYSHVDRHMHPDASVTKVVSRDVRKMVELYHGRDRGRFLKKRLFEHLHIVRKNGLLHESDEPRADLFYLTNRCNMGLEPSIYEVMKKSVIATAWVGRAPLYDYDDFALPRSTVMLNGSYRDIRILDGNGAILFLMWRYPDIVKKDLTYDPAWAMNFAVSLKEPIPDPPVPDISLCRFIGLRVESSVLRVRNPTLHETADELKRMGLDLSGHLYVTLMSGAYVTDLFWWFKMILDWSAQNKEQKLRDLKRSAAEVIEWKEQMAERPWHVRNDLIRALREYKRKMGMREGASIDSWLELLRHL</sequence>
<keyword id="KW-0167">Capsid protein</keyword>
<keyword id="KW-1152">Outer capsid protein</keyword>
<keyword id="KW-0946">Virion</keyword>
<name>VP4_BTV11</name>
<comment type="function">
    <text>The VP4 protein is one of the five proteins (with VP1, VP3, VP6 and VP7) which form the inner capsid of the virus.</text>
</comment>
<comment type="subcellular location">
    <subcellularLocation>
        <location evidence="1">Virion</location>
    </subcellularLocation>
</comment>
<comment type="similarity">
    <text evidence="1">Belongs to the orbivirus VP4 family.</text>
</comment>
<accession>P33428</accession>
<evidence type="ECO:0000305" key="1"/>
<dbReference type="EMBL" id="L08638">
    <property type="protein sequence ID" value="AAA42825.1"/>
    <property type="molecule type" value="mRNA"/>
</dbReference>
<dbReference type="SMR" id="P33428"/>
<dbReference type="GO" id="GO:0039624">
    <property type="term" value="C:viral outer capsid"/>
    <property type="evidence" value="ECO:0007669"/>
    <property type="project" value="UniProtKB-KW"/>
</dbReference>
<dbReference type="CDD" id="cd20758">
    <property type="entry name" value="capping_2-OMTase_Orbivirus"/>
    <property type="match status" value="1"/>
</dbReference>
<dbReference type="Gene3D" id="1.20.1280.200">
    <property type="entry name" value="Orbivirus VP4 core protein, C-terminal domain"/>
    <property type="match status" value="1"/>
</dbReference>
<dbReference type="Gene3D" id="3.40.50.150">
    <property type="entry name" value="Vaccinia Virus protein VP39"/>
    <property type="match status" value="1"/>
</dbReference>
<dbReference type="InterPro" id="IPR007753">
    <property type="entry name" value="Orbi_VP4"/>
</dbReference>
<dbReference type="InterPro" id="IPR043026">
    <property type="entry name" value="Orbi_VP4_C"/>
</dbReference>
<dbReference type="InterPro" id="IPR029063">
    <property type="entry name" value="SAM-dependent_MTases_sf"/>
</dbReference>
<dbReference type="Pfam" id="PF05059">
    <property type="entry name" value="Orbi_VP4"/>
    <property type="match status" value="1"/>
</dbReference>
<protein>
    <recommendedName>
        <fullName>Core protein VP4</fullName>
    </recommendedName>
</protein>
<proteinExistence type="evidence at transcript level"/>
<organismHost>
    <name type="scientific">Antilocapra americana</name>
    <name type="common">Pronghorn</name>
    <dbReference type="NCBI Taxonomy" id="9891"/>
</organismHost>
<organismHost>
    <name type="scientific">Bos taurus</name>
    <name type="common">Bovine</name>
    <dbReference type="NCBI Taxonomy" id="9913"/>
</organismHost>
<organismHost>
    <name type="scientific">Capra hircus</name>
    <name type="common">Goat</name>
    <dbReference type="NCBI Taxonomy" id="9925"/>
</organismHost>
<organismHost>
    <name type="scientific">Culicoides variipennis</name>
    <name type="common">Biting midge</name>
    <dbReference type="NCBI Taxonomy" id="46212"/>
</organismHost>
<organismHost>
    <name type="scientific">Ovis aries</name>
    <name type="common">Sheep</name>
    <dbReference type="NCBI Taxonomy" id="9940"/>
</organismHost>